<evidence type="ECO:0000255" key="1">
    <source>
        <dbReference type="HAMAP-Rule" id="MF_00109"/>
    </source>
</evidence>
<feature type="chain" id="PRO_0000237915" description="Shikimate kinase">
    <location>
        <begin position="1"/>
        <end position="172"/>
    </location>
</feature>
<feature type="binding site" evidence="1">
    <location>
        <begin position="11"/>
        <end position="16"/>
    </location>
    <ligand>
        <name>ATP</name>
        <dbReference type="ChEBI" id="CHEBI:30616"/>
    </ligand>
</feature>
<feature type="binding site" evidence="1">
    <location>
        <position position="15"/>
    </location>
    <ligand>
        <name>Mg(2+)</name>
        <dbReference type="ChEBI" id="CHEBI:18420"/>
    </ligand>
</feature>
<feature type="binding site" evidence="1">
    <location>
        <position position="33"/>
    </location>
    <ligand>
        <name>substrate</name>
    </ligand>
</feature>
<feature type="binding site" evidence="1">
    <location>
        <position position="57"/>
    </location>
    <ligand>
        <name>substrate</name>
    </ligand>
</feature>
<feature type="binding site" evidence="1">
    <location>
        <position position="79"/>
    </location>
    <ligand>
        <name>substrate</name>
    </ligand>
</feature>
<feature type="binding site" evidence="1">
    <location>
        <position position="117"/>
    </location>
    <ligand>
        <name>ATP</name>
        <dbReference type="ChEBI" id="CHEBI:30616"/>
    </ligand>
</feature>
<feature type="binding site" evidence="1">
    <location>
        <position position="136"/>
    </location>
    <ligand>
        <name>substrate</name>
    </ligand>
</feature>
<feature type="binding site" evidence="1">
    <location>
        <position position="153"/>
    </location>
    <ligand>
        <name>ATP</name>
        <dbReference type="ChEBI" id="CHEBI:30616"/>
    </ligand>
</feature>
<proteinExistence type="inferred from homology"/>
<organism>
    <name type="scientific">Pseudomonas syringae pv. syringae (strain B728a)</name>
    <dbReference type="NCBI Taxonomy" id="205918"/>
    <lineage>
        <taxon>Bacteria</taxon>
        <taxon>Pseudomonadati</taxon>
        <taxon>Pseudomonadota</taxon>
        <taxon>Gammaproteobacteria</taxon>
        <taxon>Pseudomonadales</taxon>
        <taxon>Pseudomonadaceae</taxon>
        <taxon>Pseudomonas</taxon>
        <taxon>Pseudomonas syringae</taxon>
    </lineage>
</organism>
<comment type="function">
    <text evidence="1">Catalyzes the specific phosphorylation of the 3-hydroxyl group of shikimic acid using ATP as a cosubstrate.</text>
</comment>
<comment type="catalytic activity">
    <reaction evidence="1">
        <text>shikimate + ATP = 3-phosphoshikimate + ADP + H(+)</text>
        <dbReference type="Rhea" id="RHEA:13121"/>
        <dbReference type="ChEBI" id="CHEBI:15378"/>
        <dbReference type="ChEBI" id="CHEBI:30616"/>
        <dbReference type="ChEBI" id="CHEBI:36208"/>
        <dbReference type="ChEBI" id="CHEBI:145989"/>
        <dbReference type="ChEBI" id="CHEBI:456216"/>
        <dbReference type="EC" id="2.7.1.71"/>
    </reaction>
</comment>
<comment type="cofactor">
    <cofactor evidence="1">
        <name>Mg(2+)</name>
        <dbReference type="ChEBI" id="CHEBI:18420"/>
    </cofactor>
    <text evidence="1">Binds 1 Mg(2+) ion per subunit.</text>
</comment>
<comment type="pathway">
    <text evidence="1">Metabolic intermediate biosynthesis; chorismate biosynthesis; chorismate from D-erythrose 4-phosphate and phosphoenolpyruvate: step 5/7.</text>
</comment>
<comment type="subunit">
    <text evidence="1">Monomer.</text>
</comment>
<comment type="subcellular location">
    <subcellularLocation>
        <location evidence="1">Cytoplasm</location>
    </subcellularLocation>
</comment>
<comment type="similarity">
    <text evidence="1">Belongs to the shikimate kinase family.</text>
</comment>
<reference key="1">
    <citation type="journal article" date="2005" name="Proc. Natl. Acad. Sci. U.S.A.">
        <title>Comparison of the complete genome sequences of Pseudomonas syringae pv. syringae B728a and pv. tomato DC3000.</title>
        <authorList>
            <person name="Feil H."/>
            <person name="Feil W.S."/>
            <person name="Chain P."/>
            <person name="Larimer F."/>
            <person name="Dibartolo G."/>
            <person name="Copeland A."/>
            <person name="Lykidis A."/>
            <person name="Trong S."/>
            <person name="Nolan M."/>
            <person name="Goltsman E."/>
            <person name="Thiel J."/>
            <person name="Malfatti S."/>
            <person name="Loper J.E."/>
            <person name="Lapidus A."/>
            <person name="Detter J.C."/>
            <person name="Land M."/>
            <person name="Richardson P.M."/>
            <person name="Kyrpides N.C."/>
            <person name="Ivanova N."/>
            <person name="Lindow S.E."/>
        </authorList>
    </citation>
    <scope>NUCLEOTIDE SEQUENCE [LARGE SCALE GENOMIC DNA]</scope>
    <source>
        <strain>B728a</strain>
    </source>
</reference>
<dbReference type="EC" id="2.7.1.71" evidence="1"/>
<dbReference type="EMBL" id="CP000075">
    <property type="protein sequence ID" value="AAY35478.1"/>
    <property type="molecule type" value="Genomic_DNA"/>
</dbReference>
<dbReference type="RefSeq" id="WP_011266378.1">
    <property type="nucleotide sequence ID" value="NC_007005.1"/>
</dbReference>
<dbReference type="RefSeq" id="YP_233516.1">
    <property type="nucleotide sequence ID" value="NC_007005.1"/>
</dbReference>
<dbReference type="SMR" id="Q4ZZE4"/>
<dbReference type="STRING" id="205918.Psyr_0408"/>
<dbReference type="KEGG" id="psb:Psyr_0408"/>
<dbReference type="PATRIC" id="fig|205918.7.peg.423"/>
<dbReference type="eggNOG" id="COG0703">
    <property type="taxonomic scope" value="Bacteria"/>
</dbReference>
<dbReference type="HOGENOM" id="CLU_057607_2_2_6"/>
<dbReference type="OrthoDB" id="9800332at2"/>
<dbReference type="UniPathway" id="UPA00053">
    <property type="reaction ID" value="UER00088"/>
</dbReference>
<dbReference type="Proteomes" id="UP000000426">
    <property type="component" value="Chromosome"/>
</dbReference>
<dbReference type="GO" id="GO:0005829">
    <property type="term" value="C:cytosol"/>
    <property type="evidence" value="ECO:0007669"/>
    <property type="project" value="TreeGrafter"/>
</dbReference>
<dbReference type="GO" id="GO:0005524">
    <property type="term" value="F:ATP binding"/>
    <property type="evidence" value="ECO:0007669"/>
    <property type="project" value="UniProtKB-UniRule"/>
</dbReference>
<dbReference type="GO" id="GO:0000287">
    <property type="term" value="F:magnesium ion binding"/>
    <property type="evidence" value="ECO:0007669"/>
    <property type="project" value="UniProtKB-UniRule"/>
</dbReference>
<dbReference type="GO" id="GO:0004765">
    <property type="term" value="F:shikimate kinase activity"/>
    <property type="evidence" value="ECO:0007669"/>
    <property type="project" value="UniProtKB-UniRule"/>
</dbReference>
<dbReference type="GO" id="GO:0008652">
    <property type="term" value="P:amino acid biosynthetic process"/>
    <property type="evidence" value="ECO:0007669"/>
    <property type="project" value="UniProtKB-KW"/>
</dbReference>
<dbReference type="GO" id="GO:0009073">
    <property type="term" value="P:aromatic amino acid family biosynthetic process"/>
    <property type="evidence" value="ECO:0007669"/>
    <property type="project" value="UniProtKB-KW"/>
</dbReference>
<dbReference type="GO" id="GO:0009423">
    <property type="term" value="P:chorismate biosynthetic process"/>
    <property type="evidence" value="ECO:0007669"/>
    <property type="project" value="UniProtKB-UniRule"/>
</dbReference>
<dbReference type="CDD" id="cd00464">
    <property type="entry name" value="SK"/>
    <property type="match status" value="1"/>
</dbReference>
<dbReference type="Gene3D" id="3.40.50.300">
    <property type="entry name" value="P-loop containing nucleotide triphosphate hydrolases"/>
    <property type="match status" value="1"/>
</dbReference>
<dbReference type="HAMAP" id="MF_00109">
    <property type="entry name" value="Shikimate_kinase"/>
    <property type="match status" value="1"/>
</dbReference>
<dbReference type="InterPro" id="IPR027417">
    <property type="entry name" value="P-loop_NTPase"/>
</dbReference>
<dbReference type="InterPro" id="IPR031322">
    <property type="entry name" value="Shikimate/glucono_kinase"/>
</dbReference>
<dbReference type="InterPro" id="IPR000623">
    <property type="entry name" value="Shikimate_kinase/TSH1"/>
</dbReference>
<dbReference type="InterPro" id="IPR023000">
    <property type="entry name" value="Shikimate_kinase_CS"/>
</dbReference>
<dbReference type="NCBIfam" id="NF003456">
    <property type="entry name" value="PRK05057.1"/>
    <property type="match status" value="1"/>
</dbReference>
<dbReference type="PANTHER" id="PTHR21087">
    <property type="entry name" value="SHIKIMATE KINASE"/>
    <property type="match status" value="1"/>
</dbReference>
<dbReference type="PANTHER" id="PTHR21087:SF16">
    <property type="entry name" value="SHIKIMATE KINASE 1, CHLOROPLASTIC"/>
    <property type="match status" value="1"/>
</dbReference>
<dbReference type="Pfam" id="PF01202">
    <property type="entry name" value="SKI"/>
    <property type="match status" value="1"/>
</dbReference>
<dbReference type="PRINTS" id="PR01100">
    <property type="entry name" value="SHIKIMTKNASE"/>
</dbReference>
<dbReference type="SUPFAM" id="SSF52540">
    <property type="entry name" value="P-loop containing nucleoside triphosphate hydrolases"/>
    <property type="match status" value="1"/>
</dbReference>
<dbReference type="PROSITE" id="PS01128">
    <property type="entry name" value="SHIKIMATE_KINASE"/>
    <property type="match status" value="1"/>
</dbReference>
<keyword id="KW-0028">Amino-acid biosynthesis</keyword>
<keyword id="KW-0057">Aromatic amino acid biosynthesis</keyword>
<keyword id="KW-0067">ATP-binding</keyword>
<keyword id="KW-0963">Cytoplasm</keyword>
<keyword id="KW-0418">Kinase</keyword>
<keyword id="KW-0460">Magnesium</keyword>
<keyword id="KW-0479">Metal-binding</keyword>
<keyword id="KW-0547">Nucleotide-binding</keyword>
<keyword id="KW-0808">Transferase</keyword>
<protein>
    <recommendedName>
        <fullName evidence="1">Shikimate kinase</fullName>
        <shortName evidence="1">SK</shortName>
        <ecNumber evidence="1">2.7.1.71</ecNumber>
    </recommendedName>
</protein>
<accession>Q4ZZE4</accession>
<sequence>MRNLILVGPMGAGKSTIGRLLAKELRLPFKDSDKEIELRTGANIPWIFDKEGEPGFRDREQAMIAELCAADGVVLATGGGAVMRSENRHALRAGGRVVYLHASIEQQVGRTARDRNRPLLRTADPARVLSELLAIRDPFYREIADIVIETDERPPRMVVLEILARLAELPPR</sequence>
<gene>
    <name evidence="1" type="primary">aroK</name>
    <name type="ordered locus">Psyr_0408</name>
</gene>
<name>AROK_PSEU2</name>